<organism>
    <name type="scientific">Bordetella pertussis (strain Tohama I / ATCC BAA-589 / NCTC 13251)</name>
    <dbReference type="NCBI Taxonomy" id="257313"/>
    <lineage>
        <taxon>Bacteria</taxon>
        <taxon>Pseudomonadati</taxon>
        <taxon>Pseudomonadota</taxon>
        <taxon>Betaproteobacteria</taxon>
        <taxon>Burkholderiales</taxon>
        <taxon>Alcaligenaceae</taxon>
        <taxon>Bordetella</taxon>
    </lineage>
</organism>
<name>SYQ_BORPE</name>
<proteinExistence type="inferred from homology"/>
<evidence type="ECO:0000255" key="1">
    <source>
        <dbReference type="HAMAP-Rule" id="MF_00126"/>
    </source>
</evidence>
<dbReference type="EC" id="6.1.1.18" evidence="1"/>
<dbReference type="EMBL" id="BX640420">
    <property type="protein sequence ID" value="CAE43492.1"/>
    <property type="molecule type" value="Genomic_DNA"/>
</dbReference>
<dbReference type="RefSeq" id="NP_881776.1">
    <property type="nucleotide sequence ID" value="NC_002929.2"/>
</dbReference>
<dbReference type="RefSeq" id="WP_003820957.1">
    <property type="nucleotide sequence ID" value="NZ_CP039022.1"/>
</dbReference>
<dbReference type="SMR" id="Q7VU94"/>
<dbReference type="STRING" id="257313.BP3226"/>
<dbReference type="PaxDb" id="257313-BP3226"/>
<dbReference type="KEGG" id="bpe:BP3226"/>
<dbReference type="PATRIC" id="fig|257313.5.peg.3487"/>
<dbReference type="eggNOG" id="COG0008">
    <property type="taxonomic scope" value="Bacteria"/>
</dbReference>
<dbReference type="HOGENOM" id="CLU_001882_2_3_4"/>
<dbReference type="Proteomes" id="UP000002676">
    <property type="component" value="Chromosome"/>
</dbReference>
<dbReference type="GO" id="GO:0005829">
    <property type="term" value="C:cytosol"/>
    <property type="evidence" value="ECO:0007669"/>
    <property type="project" value="TreeGrafter"/>
</dbReference>
<dbReference type="GO" id="GO:0005524">
    <property type="term" value="F:ATP binding"/>
    <property type="evidence" value="ECO:0007669"/>
    <property type="project" value="UniProtKB-UniRule"/>
</dbReference>
<dbReference type="GO" id="GO:0004819">
    <property type="term" value="F:glutamine-tRNA ligase activity"/>
    <property type="evidence" value="ECO:0007669"/>
    <property type="project" value="UniProtKB-UniRule"/>
</dbReference>
<dbReference type="GO" id="GO:0006425">
    <property type="term" value="P:glutaminyl-tRNA aminoacylation"/>
    <property type="evidence" value="ECO:0007669"/>
    <property type="project" value="InterPro"/>
</dbReference>
<dbReference type="GO" id="GO:0006424">
    <property type="term" value="P:glutamyl-tRNA aminoacylation"/>
    <property type="evidence" value="ECO:0007669"/>
    <property type="project" value="UniProtKB-UniRule"/>
</dbReference>
<dbReference type="FunFam" id="1.10.1160.10:FF:000001">
    <property type="entry name" value="Glutamine--tRNA ligase"/>
    <property type="match status" value="1"/>
</dbReference>
<dbReference type="FunFam" id="3.90.800.10:FF:000001">
    <property type="entry name" value="Glutamine--tRNA ligase"/>
    <property type="match status" value="1"/>
</dbReference>
<dbReference type="FunFam" id="3.40.50.620:FF:000037">
    <property type="entry name" value="Glutamine--tRNA ligase cytoplasmic"/>
    <property type="match status" value="1"/>
</dbReference>
<dbReference type="Gene3D" id="3.40.50.620">
    <property type="entry name" value="HUPs"/>
    <property type="match status" value="1"/>
</dbReference>
<dbReference type="Gene3D" id="2.40.240.10">
    <property type="entry name" value="Ribosomal Protein L25, Chain P"/>
    <property type="match status" value="2"/>
</dbReference>
<dbReference type="HAMAP" id="MF_00126">
    <property type="entry name" value="Gln_tRNA_synth"/>
    <property type="match status" value="1"/>
</dbReference>
<dbReference type="InterPro" id="IPR001412">
    <property type="entry name" value="aa-tRNA-synth_I_CS"/>
</dbReference>
<dbReference type="InterPro" id="IPR004514">
    <property type="entry name" value="Gln-tRNA-synth"/>
</dbReference>
<dbReference type="InterPro" id="IPR050132">
    <property type="entry name" value="Gln/Glu-tRNA_Ligase"/>
</dbReference>
<dbReference type="InterPro" id="IPR022861">
    <property type="entry name" value="Gln_tRNA_ligase_bac"/>
</dbReference>
<dbReference type="InterPro" id="IPR000924">
    <property type="entry name" value="Glu/Gln-tRNA-synth"/>
</dbReference>
<dbReference type="InterPro" id="IPR020058">
    <property type="entry name" value="Glu/Gln-tRNA-synth_Ib_cat-dom"/>
</dbReference>
<dbReference type="InterPro" id="IPR020059">
    <property type="entry name" value="Glu/Gln-tRNA-synth_Ib_codon-bd"/>
</dbReference>
<dbReference type="InterPro" id="IPR020056">
    <property type="entry name" value="Rbsml_bL25/Gln-tRNA_synth_N"/>
</dbReference>
<dbReference type="InterPro" id="IPR011035">
    <property type="entry name" value="Ribosomal_bL25/Gln-tRNA_synth"/>
</dbReference>
<dbReference type="InterPro" id="IPR014729">
    <property type="entry name" value="Rossmann-like_a/b/a_fold"/>
</dbReference>
<dbReference type="InterPro" id="IPR049437">
    <property type="entry name" value="tRNA-synt_1c_C2"/>
</dbReference>
<dbReference type="NCBIfam" id="TIGR00440">
    <property type="entry name" value="glnS"/>
    <property type="match status" value="1"/>
</dbReference>
<dbReference type="NCBIfam" id="NF011291">
    <property type="entry name" value="PRK14703.1"/>
    <property type="match status" value="1"/>
</dbReference>
<dbReference type="PANTHER" id="PTHR43097:SF5">
    <property type="entry name" value="GLUTAMATE--TRNA LIGASE"/>
    <property type="match status" value="1"/>
</dbReference>
<dbReference type="PANTHER" id="PTHR43097">
    <property type="entry name" value="GLUTAMINE-TRNA LIGASE"/>
    <property type="match status" value="1"/>
</dbReference>
<dbReference type="Pfam" id="PF00749">
    <property type="entry name" value="tRNA-synt_1c"/>
    <property type="match status" value="1"/>
</dbReference>
<dbReference type="Pfam" id="PF03950">
    <property type="entry name" value="tRNA-synt_1c_C"/>
    <property type="match status" value="1"/>
</dbReference>
<dbReference type="Pfam" id="PF20974">
    <property type="entry name" value="tRNA-synt_1c_C2"/>
    <property type="match status" value="1"/>
</dbReference>
<dbReference type="PRINTS" id="PR00987">
    <property type="entry name" value="TRNASYNTHGLU"/>
</dbReference>
<dbReference type="SUPFAM" id="SSF52374">
    <property type="entry name" value="Nucleotidylyl transferase"/>
    <property type="match status" value="1"/>
</dbReference>
<dbReference type="SUPFAM" id="SSF50715">
    <property type="entry name" value="Ribosomal protein L25-like"/>
    <property type="match status" value="1"/>
</dbReference>
<dbReference type="PROSITE" id="PS00178">
    <property type="entry name" value="AA_TRNA_LIGASE_I"/>
    <property type="match status" value="1"/>
</dbReference>
<comment type="catalytic activity">
    <reaction evidence="1">
        <text>tRNA(Gln) + L-glutamine + ATP = L-glutaminyl-tRNA(Gln) + AMP + diphosphate</text>
        <dbReference type="Rhea" id="RHEA:20121"/>
        <dbReference type="Rhea" id="RHEA-COMP:9662"/>
        <dbReference type="Rhea" id="RHEA-COMP:9681"/>
        <dbReference type="ChEBI" id="CHEBI:30616"/>
        <dbReference type="ChEBI" id="CHEBI:33019"/>
        <dbReference type="ChEBI" id="CHEBI:58359"/>
        <dbReference type="ChEBI" id="CHEBI:78442"/>
        <dbReference type="ChEBI" id="CHEBI:78521"/>
        <dbReference type="ChEBI" id="CHEBI:456215"/>
        <dbReference type="EC" id="6.1.1.18"/>
    </reaction>
</comment>
<comment type="subunit">
    <text evidence="1">Monomer.</text>
</comment>
<comment type="subcellular location">
    <subcellularLocation>
        <location evidence="1">Cytoplasm</location>
    </subcellularLocation>
</comment>
<comment type="similarity">
    <text evidence="1">Belongs to the class-I aminoacyl-tRNA synthetase family.</text>
</comment>
<protein>
    <recommendedName>
        <fullName evidence="1">Glutamine--tRNA ligase</fullName>
        <ecNumber evidence="1">6.1.1.18</ecNumber>
    </recommendedName>
    <alternativeName>
        <fullName evidence="1">Glutaminyl-tRNA synthetase</fullName>
        <shortName evidence="1">GlnRS</shortName>
    </alternativeName>
</protein>
<accession>Q7VU94</accession>
<reference key="1">
    <citation type="journal article" date="2003" name="Nat. Genet.">
        <title>Comparative analysis of the genome sequences of Bordetella pertussis, Bordetella parapertussis and Bordetella bronchiseptica.</title>
        <authorList>
            <person name="Parkhill J."/>
            <person name="Sebaihia M."/>
            <person name="Preston A."/>
            <person name="Murphy L.D."/>
            <person name="Thomson N.R."/>
            <person name="Harris D.E."/>
            <person name="Holden M.T.G."/>
            <person name="Churcher C.M."/>
            <person name="Bentley S.D."/>
            <person name="Mungall K.L."/>
            <person name="Cerdeno-Tarraga A.-M."/>
            <person name="Temple L."/>
            <person name="James K.D."/>
            <person name="Harris B."/>
            <person name="Quail M.A."/>
            <person name="Achtman M."/>
            <person name="Atkin R."/>
            <person name="Baker S."/>
            <person name="Basham D."/>
            <person name="Bason N."/>
            <person name="Cherevach I."/>
            <person name="Chillingworth T."/>
            <person name="Collins M."/>
            <person name="Cronin A."/>
            <person name="Davis P."/>
            <person name="Doggett J."/>
            <person name="Feltwell T."/>
            <person name="Goble A."/>
            <person name="Hamlin N."/>
            <person name="Hauser H."/>
            <person name="Holroyd S."/>
            <person name="Jagels K."/>
            <person name="Leather S."/>
            <person name="Moule S."/>
            <person name="Norberczak H."/>
            <person name="O'Neil S."/>
            <person name="Ormond D."/>
            <person name="Price C."/>
            <person name="Rabbinowitsch E."/>
            <person name="Rutter S."/>
            <person name="Sanders M."/>
            <person name="Saunders D."/>
            <person name="Seeger K."/>
            <person name="Sharp S."/>
            <person name="Simmonds M."/>
            <person name="Skelton J."/>
            <person name="Squares R."/>
            <person name="Squares S."/>
            <person name="Stevens K."/>
            <person name="Unwin L."/>
            <person name="Whitehead S."/>
            <person name="Barrell B.G."/>
            <person name="Maskell D.J."/>
        </authorList>
    </citation>
    <scope>NUCLEOTIDE SEQUENCE [LARGE SCALE GENOMIC DNA]</scope>
    <source>
        <strain>Tohama I / ATCC BAA-589 / NCTC 13251</strain>
    </source>
</reference>
<sequence>MTHAPTPPAASNFLRPIIEDDLQANRFQGKLWAGKPGPAALQAQGQPDPARIRTRFPPEPNGYLHIGHAKSICVNFGLARDYGGVCHLRFDDTNPEKEEQEYVDAIIEAVHWLGFDWQADGNDNLYFASDYFEFMYEFAEALVQAGHAYVDEQSAEEIRASRGTLTEPGTDSPWRDRPADESLLRLREMRDGKHPDGSLVLRARIDMASPNINLRDPVMYRVRHATHHRTGNAWCIYPMYSWAHPVEDALEGITHSICTLEFEDQRPFYDWILARLAELGKLARPLPHQYEFARLNLTYVVTSKRKLLQLVREGYVDGWDDPRMPTLFGLRRRGYTPSSIRLFCDRTAVSKSDSRIDYSLLEQAVRDDLDPVAPRSVAVLDPLKLVITNYPEGRSETCSAPRNPHDPQAGVREFPFTRELWIEQDDFREEPPKKYFRLFPGNTVRLKYGYVVRCTGFTKDESGKVVEVQAEYLPDTKSGTPGADSVKVKGNITWVSAAHAVPAQVHLYDRLFADAHPDGGDKDFLACLNPNSKQTVQAWLEPGIEAVPGATWQFERLGYFTVDSKDSRPEAPVLNRIVTLRDSWQAA</sequence>
<keyword id="KW-0030">Aminoacyl-tRNA synthetase</keyword>
<keyword id="KW-0067">ATP-binding</keyword>
<keyword id="KW-0963">Cytoplasm</keyword>
<keyword id="KW-0436">Ligase</keyword>
<keyword id="KW-0547">Nucleotide-binding</keyword>
<keyword id="KW-0648">Protein biosynthesis</keyword>
<keyword id="KW-1185">Reference proteome</keyword>
<gene>
    <name evidence="1" type="primary">glnS</name>
    <name type="ordered locus">BP3226</name>
</gene>
<feature type="chain" id="PRO_1000095481" description="Glutamine--tRNA ligase">
    <location>
        <begin position="1"/>
        <end position="587"/>
    </location>
</feature>
<feature type="short sequence motif" description="'HIGH' region" evidence="1">
    <location>
        <begin position="58"/>
        <end position="68"/>
    </location>
</feature>
<feature type="short sequence motif" description="'KMSKS' region" evidence="1">
    <location>
        <begin position="301"/>
        <end position="305"/>
    </location>
</feature>
<feature type="binding site" evidence="1">
    <location>
        <begin position="59"/>
        <end position="61"/>
    </location>
    <ligand>
        <name>ATP</name>
        <dbReference type="ChEBI" id="CHEBI:30616"/>
    </ligand>
</feature>
<feature type="binding site" evidence="1">
    <location>
        <begin position="65"/>
        <end position="71"/>
    </location>
    <ligand>
        <name>ATP</name>
        <dbReference type="ChEBI" id="CHEBI:30616"/>
    </ligand>
</feature>
<feature type="binding site" evidence="1">
    <location>
        <position position="91"/>
    </location>
    <ligand>
        <name>L-glutamine</name>
        <dbReference type="ChEBI" id="CHEBI:58359"/>
    </ligand>
</feature>
<feature type="binding site" evidence="1">
    <location>
        <position position="240"/>
    </location>
    <ligand>
        <name>L-glutamine</name>
        <dbReference type="ChEBI" id="CHEBI:58359"/>
    </ligand>
</feature>
<feature type="binding site" evidence="1">
    <location>
        <position position="259"/>
    </location>
    <ligand>
        <name>ATP</name>
        <dbReference type="ChEBI" id="CHEBI:30616"/>
    </ligand>
</feature>
<feature type="binding site" evidence="1">
    <location>
        <begin position="294"/>
        <end position="295"/>
    </location>
    <ligand>
        <name>ATP</name>
        <dbReference type="ChEBI" id="CHEBI:30616"/>
    </ligand>
</feature>